<name>NBP1A_XENLA</name>
<organism>
    <name type="scientific">Xenopus laevis</name>
    <name type="common">African clawed frog</name>
    <dbReference type="NCBI Taxonomy" id="8355"/>
    <lineage>
        <taxon>Eukaryota</taxon>
        <taxon>Metazoa</taxon>
        <taxon>Chordata</taxon>
        <taxon>Craniata</taxon>
        <taxon>Vertebrata</taxon>
        <taxon>Euteleostomi</taxon>
        <taxon>Amphibia</taxon>
        <taxon>Batrachia</taxon>
        <taxon>Anura</taxon>
        <taxon>Pipoidea</taxon>
        <taxon>Pipidae</taxon>
        <taxon>Xenopodinae</taxon>
        <taxon>Xenopus</taxon>
        <taxon>Xenopus</taxon>
    </lineage>
</organism>
<evidence type="ECO:0000250" key="1">
    <source>
        <dbReference type="UniProtKB" id="Q09161"/>
    </source>
</evidence>
<evidence type="ECO:0000255" key="2"/>
<evidence type="ECO:0000256" key="3">
    <source>
        <dbReference type="SAM" id="MobiDB-lite"/>
    </source>
</evidence>
<evidence type="ECO:0000305" key="4"/>
<comment type="function">
    <text evidence="1">Component of the cap-binding complex (CBC), which binds cotranscriptionally to the 5'-cap of pre-mRNAs and is involved in various processes such as pre-mRNA splicing, translation regulation, nonsense-mediated mRNA decay, RNA-mediated gene silencing (RNAi) by microRNAs (miRNAs) and mRNA export. The CBC complex is involved in mRNA export from the nucleus, leading to the recruitment of the mRNA export machinery to the 5'-end of mRNA and to mRNA export in a 5' to 3' direction through the nuclear pore. The CBC complex is also involved in mediating U snRNA and intronless mRNAs export from the nucleus. The CBC complex is essential for a pioneer round of mRNA translation, before steady state translation when the CBC complex is replaced by cytoplasmic cap-binding protein eIF4E. The pioneer round of mRNA translation mediated by the CBC complex plays a central role in nonsense-mediated mRNA decay (NMD), NMD only taking place in mRNAs bound to the CBC complex, but not on eIF4E-bound mRNAs. The CBC complex enhances NMD in mRNAs containing at least one exon-junction complex (EJC), promoting the interaction between UPF1 and UPF2. The CBC complex is also involved in 'failsafe' NMD, which is independent of the EJC complex, while it does not participate in Staufen-mediated mRNA decay (SMD). During cell proliferation, the CBC complex is also involved in microRNAs (miRNAs) biogenesis via its interaction with SRRT/ARS2 and is required for miRNA-mediated RNA interference. The CBC complex also acts as a negative regulator of parn, thereby acting as an inhibitor of mRNA deadenylation. In the CBC complex, NCBP1/CBP80 does not bind directly capped RNAs (m7GpppG-capped RNA) but is required to stabilize the movement of the N-terminal loop of NCBP2/CBP20 and lock the CBC into a high affinity cap-binding state with the cap structure. Associates with NCBP3 to form an alternative cap-binding complex (CBC) which plays a key role in mRNA export. The conventional CBC with NCBP2 binds both small nuclear RNA (snRNA) and messenger (mRNA) and is involved in their export from the nucleus whereas the alternative CBC with NCBP3 does not bind snRNA and associates only with mRNA thereby playing a role only in mRNA export (By similarity).</text>
</comment>
<comment type="subunit">
    <text evidence="1">Component of the nuclear cap-binding complex (CBC), a heterodimer composed of ncbp1/cbp80 and ncbp2/cbp20 that interacts with m7GpppG-capped RNA. Component of an alternative nuclear cap-binding complex (CBC) composed of ncbp1/cbp80 and ncbp3 (By similarity).</text>
</comment>
<comment type="subcellular location">
    <subcellularLocation>
        <location evidence="1">Nucleus</location>
    </subcellularLocation>
    <subcellularLocation>
        <location evidence="1">Cytoplasm</location>
    </subcellularLocation>
</comment>
<comment type="similarity">
    <text evidence="4">Belongs to the NCBP1 family.</text>
</comment>
<dbReference type="EMBL" id="BC072867">
    <property type="protein sequence ID" value="AAH72867.1"/>
    <property type="molecule type" value="mRNA"/>
</dbReference>
<dbReference type="RefSeq" id="NP_001085510.1">
    <property type="nucleotide sequence ID" value="NM_001092041.1"/>
</dbReference>
<dbReference type="SMR" id="Q6GQ80"/>
<dbReference type="BioGRID" id="102099">
    <property type="interactions" value="1"/>
</dbReference>
<dbReference type="IntAct" id="Q6GQ80">
    <property type="interactions" value="1"/>
</dbReference>
<dbReference type="DNASU" id="443936"/>
<dbReference type="GeneID" id="443936"/>
<dbReference type="KEGG" id="xla:443936"/>
<dbReference type="AGR" id="Xenbase:XB-GENE-5841293"/>
<dbReference type="CTD" id="443936"/>
<dbReference type="Xenbase" id="XB-GENE-5841293">
    <property type="gene designation" value="ncbp1.L"/>
</dbReference>
<dbReference type="OMA" id="CAAEGLM"/>
<dbReference type="OrthoDB" id="10252707at2759"/>
<dbReference type="Proteomes" id="UP000186698">
    <property type="component" value="Chromosome 1L"/>
</dbReference>
<dbReference type="Bgee" id="443936">
    <property type="expression patterns" value="Expressed in blastula and 19 other cell types or tissues"/>
</dbReference>
<dbReference type="GO" id="GO:0005737">
    <property type="term" value="C:cytoplasm"/>
    <property type="evidence" value="ECO:0007669"/>
    <property type="project" value="UniProtKB-SubCell"/>
</dbReference>
<dbReference type="GO" id="GO:0005846">
    <property type="term" value="C:nuclear cap binding complex"/>
    <property type="evidence" value="ECO:0000318"/>
    <property type="project" value="GO_Central"/>
</dbReference>
<dbReference type="GO" id="GO:0005634">
    <property type="term" value="C:nucleus"/>
    <property type="evidence" value="ECO:0000318"/>
    <property type="project" value="GO_Central"/>
</dbReference>
<dbReference type="GO" id="GO:0003729">
    <property type="term" value="F:mRNA binding"/>
    <property type="evidence" value="ECO:0000318"/>
    <property type="project" value="GO_Central"/>
</dbReference>
<dbReference type="GO" id="GO:0000339">
    <property type="term" value="F:RNA cap binding"/>
    <property type="evidence" value="ECO:0000318"/>
    <property type="project" value="GO_Central"/>
</dbReference>
<dbReference type="GO" id="GO:0006370">
    <property type="term" value="P:7-methylguanosine mRNA capping"/>
    <property type="evidence" value="ECO:0007669"/>
    <property type="project" value="UniProtKB-KW"/>
</dbReference>
<dbReference type="GO" id="GO:0006406">
    <property type="term" value="P:mRNA export from nucleus"/>
    <property type="evidence" value="ECO:0000250"/>
    <property type="project" value="UniProtKB"/>
</dbReference>
<dbReference type="GO" id="GO:0000184">
    <property type="term" value="P:nuclear-transcribed mRNA catabolic process, nonsense-mediated decay"/>
    <property type="evidence" value="ECO:0000318"/>
    <property type="project" value="GO_Central"/>
</dbReference>
<dbReference type="GO" id="GO:0050684">
    <property type="term" value="P:regulation of mRNA processing"/>
    <property type="evidence" value="ECO:0000318"/>
    <property type="project" value="GO_Central"/>
</dbReference>
<dbReference type="GO" id="GO:0006417">
    <property type="term" value="P:regulation of translation"/>
    <property type="evidence" value="ECO:0007669"/>
    <property type="project" value="UniProtKB-KW"/>
</dbReference>
<dbReference type="GO" id="GO:0031047">
    <property type="term" value="P:regulatory ncRNA-mediated gene silencing"/>
    <property type="evidence" value="ECO:0007669"/>
    <property type="project" value="UniProtKB-KW"/>
</dbReference>
<dbReference type="GO" id="GO:0008380">
    <property type="term" value="P:RNA splicing"/>
    <property type="evidence" value="ECO:0007669"/>
    <property type="project" value="UniProtKB-KW"/>
</dbReference>
<dbReference type="FunFam" id="1.25.40.180:FF:000021">
    <property type="entry name" value="Nuclear cap binding protein subunit 1"/>
    <property type="match status" value="1"/>
</dbReference>
<dbReference type="FunFam" id="1.25.40.180:FF:000010">
    <property type="entry name" value="Nuclear cap-binding protein subunit 1"/>
    <property type="match status" value="1"/>
</dbReference>
<dbReference type="Gene3D" id="1.25.40.180">
    <property type="match status" value="3"/>
</dbReference>
<dbReference type="InterPro" id="IPR016024">
    <property type="entry name" value="ARM-type_fold"/>
</dbReference>
<dbReference type="InterPro" id="IPR027159">
    <property type="entry name" value="CBP80"/>
</dbReference>
<dbReference type="InterPro" id="IPR015172">
    <property type="entry name" value="MIF4G-like_typ-1"/>
</dbReference>
<dbReference type="InterPro" id="IPR015174">
    <property type="entry name" value="MIF4G-like_typ-2"/>
</dbReference>
<dbReference type="InterPro" id="IPR003890">
    <property type="entry name" value="MIF4G-like_typ-3"/>
</dbReference>
<dbReference type="PANTHER" id="PTHR12412">
    <property type="entry name" value="CAP BINDING PROTEIN"/>
    <property type="match status" value="1"/>
</dbReference>
<dbReference type="PANTHER" id="PTHR12412:SF2">
    <property type="entry name" value="NUCLEAR CAP-BINDING PROTEIN SUBUNIT 1"/>
    <property type="match status" value="1"/>
</dbReference>
<dbReference type="Pfam" id="PF02854">
    <property type="entry name" value="MIF4G"/>
    <property type="match status" value="1"/>
</dbReference>
<dbReference type="Pfam" id="PF09088">
    <property type="entry name" value="MIF4G_like"/>
    <property type="match status" value="1"/>
</dbReference>
<dbReference type="Pfam" id="PF09090">
    <property type="entry name" value="MIF4G_like_2"/>
    <property type="match status" value="1"/>
</dbReference>
<dbReference type="SMART" id="SM00543">
    <property type="entry name" value="MIF4G"/>
    <property type="match status" value="1"/>
</dbReference>
<dbReference type="SUPFAM" id="SSF48371">
    <property type="entry name" value="ARM repeat"/>
    <property type="match status" value="3"/>
</dbReference>
<proteinExistence type="evidence at transcript level"/>
<protein>
    <recommendedName>
        <fullName>Nuclear cap-binding protein subunit 1-A</fullName>
    </recommendedName>
</protein>
<accession>Q6GQ80</accession>
<gene>
    <name type="primary">ncbp1-a</name>
</gene>
<sequence>MSRRRHSDENDGGQAHKRRKTSEPLEIEDRLESLICRVGEKSTSSLESNLEGLAGVLEADLPNYKSKILRILCFVARLLPEKMSVYSTLVGLLNARNYNFGGEFVEAMIRHLKETIKLNAYSEAVYLVRFLSDLVNCHVIAAPSMVAMFESFVGVTQEEDIPQVRSDWYVYAVLSSLPWVGKELYEKKDVEMDRILSQIEAYLKQRQKLHVSILQVWSAEKPHPQEEYLDCLWAQIQKLKKDRWQERHILRPYLAFDSVLCEALQHNLPPFTPPPHTEDSVYPVPRVVFRMFDYTDAPEGPVMPGSHSVERFVIEENLHCILKSHWRERKTCAAQLLSYPEKNKIPLNYHIVEVIFGELFQLPTPPHIDVMYTTLLIELCKLQPGSLPQVLAQASEMLYTRLDTMNTICIDRFINWFSHHLSNFQFRWNWEDWADCLSQDLNKPKPQFVREVLEKCMRLSYHQRILDIVPATFSALYPASPSCVFKYGDESNSALPGYSVAVTLTNEIKNKASDKEIFNILKDIPNPNQDDDDDEGISFNPLKIEVFVQSLLNLASKSFSHAFSALAKFHDIFKALSESDEGKLHILRVAYDVWKNHPQMIAVLVDKMIRTQIVDCAAVANWIFSPELSHDFTRFYIWEILHSTIRKMNKHVQKIQKELEETKQRLAKQHKHRDSDDNDEDSGRKDGPLEEQIERLQEKVESAQSEQKNLFLVIFQRFIMILTEHLVRCETGAIDVNTAWYKNCRERLQQIFLQHHQTIQQYMVTLENLLFTAELDHHILTVFQQFCALQS</sequence>
<reference key="1">
    <citation type="submission" date="2004-06" db="EMBL/GenBank/DDBJ databases">
        <authorList>
            <consortium name="NIH - Xenopus Gene Collection (XGC) project"/>
        </authorList>
    </citation>
    <scope>NUCLEOTIDE SEQUENCE [LARGE SCALE MRNA]</scope>
    <source>
        <tissue>Ovary</tissue>
    </source>
</reference>
<feature type="chain" id="PRO_0000239782" description="Nuclear cap-binding protein subunit 1-A">
    <location>
        <begin position="1"/>
        <end position="791"/>
    </location>
</feature>
<feature type="domain" description="MIF4G">
    <location>
        <begin position="28"/>
        <end position="240"/>
    </location>
</feature>
<feature type="region of interest" description="Disordered" evidence="3">
    <location>
        <begin position="1"/>
        <end position="24"/>
    </location>
</feature>
<feature type="region of interest" description="Disordered" evidence="3">
    <location>
        <begin position="664"/>
        <end position="687"/>
    </location>
</feature>
<feature type="coiled-coil region" evidence="2">
    <location>
        <begin position="641"/>
        <end position="714"/>
    </location>
</feature>
<keyword id="KW-0175">Coiled coil</keyword>
<keyword id="KW-0963">Cytoplasm</keyword>
<keyword id="KW-0506">mRNA capping</keyword>
<keyword id="KW-0507">mRNA processing</keyword>
<keyword id="KW-0508">mRNA splicing</keyword>
<keyword id="KW-0509">mRNA transport</keyword>
<keyword id="KW-0866">Nonsense-mediated mRNA decay</keyword>
<keyword id="KW-0539">Nucleus</keyword>
<keyword id="KW-1185">Reference proteome</keyword>
<keyword id="KW-0694">RNA-binding</keyword>
<keyword id="KW-0943">RNA-mediated gene silencing</keyword>
<keyword id="KW-0810">Translation regulation</keyword>
<keyword id="KW-0813">Transport</keyword>